<proteinExistence type="inferred from homology"/>
<organism>
    <name type="scientific">Methanosarcina mazei (strain ATCC BAA-159 / DSM 3647 / Goe1 / Go1 / JCM 11833 / OCM 88)</name>
    <name type="common">Methanosarcina frisia</name>
    <dbReference type="NCBI Taxonomy" id="192952"/>
    <lineage>
        <taxon>Archaea</taxon>
        <taxon>Methanobacteriati</taxon>
        <taxon>Methanobacteriota</taxon>
        <taxon>Stenosarchaea group</taxon>
        <taxon>Methanomicrobia</taxon>
        <taxon>Methanosarcinales</taxon>
        <taxon>Methanosarcinaceae</taxon>
        <taxon>Methanosarcina</taxon>
    </lineage>
</organism>
<keyword id="KW-0235">DNA replication</keyword>
<keyword id="KW-0238">DNA-binding</keyword>
<protein>
    <recommendedName>
        <fullName evidence="1">DNA polymerase sliding clamp</fullName>
    </recommendedName>
    <alternativeName>
        <fullName evidence="1">Proliferating cell nuclear antigen homolog</fullName>
        <shortName evidence="1">PCNA</shortName>
    </alternativeName>
</protein>
<accession>Q8PX25</accession>
<dbReference type="EMBL" id="AE008384">
    <property type="protein sequence ID" value="AAM31093.1"/>
    <property type="molecule type" value="Genomic_DNA"/>
</dbReference>
<dbReference type="RefSeq" id="WP_011033343.1">
    <property type="nucleotide sequence ID" value="NC_003901.1"/>
</dbReference>
<dbReference type="SMR" id="Q8PX25"/>
<dbReference type="KEGG" id="mma:MM_1397"/>
<dbReference type="PATRIC" id="fig|192952.21.peg.1619"/>
<dbReference type="eggNOG" id="arCOG00488">
    <property type="taxonomic scope" value="Archaea"/>
</dbReference>
<dbReference type="HOGENOM" id="CLU_043978_1_1_2"/>
<dbReference type="Proteomes" id="UP000000595">
    <property type="component" value="Chromosome"/>
</dbReference>
<dbReference type="GO" id="GO:0003677">
    <property type="term" value="F:DNA binding"/>
    <property type="evidence" value="ECO:0007669"/>
    <property type="project" value="UniProtKB-UniRule"/>
</dbReference>
<dbReference type="GO" id="GO:0030337">
    <property type="term" value="F:DNA polymerase processivity factor activity"/>
    <property type="evidence" value="ECO:0007669"/>
    <property type="project" value="UniProtKB-UniRule"/>
</dbReference>
<dbReference type="GO" id="GO:0006272">
    <property type="term" value="P:leading strand elongation"/>
    <property type="evidence" value="ECO:0007669"/>
    <property type="project" value="TreeGrafter"/>
</dbReference>
<dbReference type="GO" id="GO:0006275">
    <property type="term" value="P:regulation of DNA replication"/>
    <property type="evidence" value="ECO:0007669"/>
    <property type="project" value="UniProtKB-UniRule"/>
</dbReference>
<dbReference type="CDD" id="cd00577">
    <property type="entry name" value="PCNA"/>
    <property type="match status" value="1"/>
</dbReference>
<dbReference type="FunFam" id="3.70.10.10:FF:000015">
    <property type="entry name" value="DNA polymerase sliding clamp"/>
    <property type="match status" value="1"/>
</dbReference>
<dbReference type="Gene3D" id="3.70.10.10">
    <property type="match status" value="1"/>
</dbReference>
<dbReference type="HAMAP" id="MF_00317">
    <property type="entry name" value="DNApol_clamp_arch"/>
    <property type="match status" value="1"/>
</dbReference>
<dbReference type="InterPro" id="IPR046938">
    <property type="entry name" value="DNA_clamp_sf"/>
</dbReference>
<dbReference type="InterPro" id="IPR000730">
    <property type="entry name" value="Pr_cel_nuc_antig"/>
</dbReference>
<dbReference type="InterPro" id="IPR022649">
    <property type="entry name" value="Pr_cel_nuc_antig_C"/>
</dbReference>
<dbReference type="InterPro" id="IPR022659">
    <property type="entry name" value="Pr_cel_nuc_antig_CS"/>
</dbReference>
<dbReference type="InterPro" id="IPR022648">
    <property type="entry name" value="Pr_cel_nuc_antig_N"/>
</dbReference>
<dbReference type="NCBIfam" id="NF002222">
    <property type="entry name" value="PRK01115.1-5"/>
    <property type="match status" value="1"/>
</dbReference>
<dbReference type="PANTHER" id="PTHR11352">
    <property type="entry name" value="PROLIFERATING CELL NUCLEAR ANTIGEN"/>
    <property type="match status" value="1"/>
</dbReference>
<dbReference type="PANTHER" id="PTHR11352:SF0">
    <property type="entry name" value="PROLIFERATING CELL NUCLEAR ANTIGEN"/>
    <property type="match status" value="1"/>
</dbReference>
<dbReference type="Pfam" id="PF02747">
    <property type="entry name" value="PCNA_C"/>
    <property type="match status" value="1"/>
</dbReference>
<dbReference type="Pfam" id="PF00705">
    <property type="entry name" value="PCNA_N"/>
    <property type="match status" value="1"/>
</dbReference>
<dbReference type="PRINTS" id="PR00339">
    <property type="entry name" value="PCNACYCLIN"/>
</dbReference>
<dbReference type="SUPFAM" id="SSF55979">
    <property type="entry name" value="DNA clamp"/>
    <property type="match status" value="2"/>
</dbReference>
<dbReference type="PROSITE" id="PS01251">
    <property type="entry name" value="PCNA_1"/>
    <property type="match status" value="1"/>
</dbReference>
<feature type="chain" id="PRO_0000149198" description="DNA polymerase sliding clamp">
    <location>
        <begin position="1"/>
        <end position="245"/>
    </location>
</feature>
<evidence type="ECO:0000255" key="1">
    <source>
        <dbReference type="HAMAP-Rule" id="MF_00317"/>
    </source>
</evidence>
<name>PCNA_METMA</name>
<sequence>MFKAAINAELLKDAIASLAVIVDEVRFKIKPEGISVKAVDPANVAMGIFELGSSAFEEYSADECEIGIDLNKITDLLGIADRNDTVRMELDEGSNKLLIDVGGLSYTLSLLDPSTIRAEPRVPQLELPAKVVLNGADLRRAVKAAEKISDHMLMGVSGDTFYMEAKGDTDQVRLEMGRDQLIDLKAGEACSLFSLDYLTDIVKPTNKVNEVTLSLGRDFPILIDFEIANGAGRISYLLAPRIESD</sequence>
<comment type="function">
    <text evidence="1">Sliding clamp subunit that acts as a moving platform for DNA processing. Responsible for tethering the catalytic subunit of DNA polymerase and other proteins to DNA during high-speed replication.</text>
</comment>
<comment type="subunit">
    <text evidence="1">Homotrimer. The subunits circularize to form a toroid; DNA passes through its center. Replication factor C (RFC) is required to load the toroid on the DNA.</text>
</comment>
<comment type="similarity">
    <text evidence="1">Belongs to the PCNA family.</text>
</comment>
<reference key="1">
    <citation type="journal article" date="2002" name="J. Mol. Microbiol. Biotechnol.">
        <title>The genome of Methanosarcina mazei: evidence for lateral gene transfer between Bacteria and Archaea.</title>
        <authorList>
            <person name="Deppenmeier U."/>
            <person name="Johann A."/>
            <person name="Hartsch T."/>
            <person name="Merkl R."/>
            <person name="Schmitz R.A."/>
            <person name="Martinez-Arias R."/>
            <person name="Henne A."/>
            <person name="Wiezer A."/>
            <person name="Baeumer S."/>
            <person name="Jacobi C."/>
            <person name="Brueggemann H."/>
            <person name="Lienard T."/>
            <person name="Christmann A."/>
            <person name="Boemecke M."/>
            <person name="Steckel S."/>
            <person name="Bhattacharyya A."/>
            <person name="Lykidis A."/>
            <person name="Overbeek R."/>
            <person name="Klenk H.-P."/>
            <person name="Gunsalus R.P."/>
            <person name="Fritz H.-J."/>
            <person name="Gottschalk G."/>
        </authorList>
    </citation>
    <scope>NUCLEOTIDE SEQUENCE [LARGE SCALE GENOMIC DNA]</scope>
    <source>
        <strain>ATCC BAA-159 / DSM 3647 / Goe1 / Go1 / JCM 11833 / OCM 88</strain>
    </source>
</reference>
<gene>
    <name evidence="1" type="primary">pcn</name>
    <name type="ordered locus">MM_1397</name>
</gene>